<feature type="chain" id="PRO_0000231539" description="Deoxyribose-phosphate aldolase">
    <location>
        <begin position="1"/>
        <end position="227"/>
    </location>
</feature>
<feature type="active site" description="Proton donor/acceptor" evidence="1">
    <location>
        <position position="96"/>
    </location>
</feature>
<feature type="active site" description="Schiff-base intermediate with acetaldehyde" evidence="1">
    <location>
        <position position="158"/>
    </location>
</feature>
<feature type="active site" description="Proton donor/acceptor" evidence="1">
    <location>
        <position position="187"/>
    </location>
</feature>
<name>DEOC_DESPS</name>
<evidence type="ECO:0000255" key="1">
    <source>
        <dbReference type="HAMAP-Rule" id="MF_00114"/>
    </source>
</evidence>
<gene>
    <name evidence="1" type="primary">deoC</name>
    <name type="ordered locus">DP1973</name>
</gene>
<protein>
    <recommendedName>
        <fullName evidence="1">Deoxyribose-phosphate aldolase</fullName>
        <shortName evidence="1">DERA</shortName>
        <ecNumber evidence="1">4.1.2.4</ecNumber>
    </recommendedName>
    <alternativeName>
        <fullName evidence="1">2-deoxy-D-ribose 5-phosphate aldolase</fullName>
    </alternativeName>
    <alternativeName>
        <fullName evidence="1">Phosphodeoxyriboaldolase</fullName>
        <shortName evidence="1">Deoxyriboaldolase</shortName>
    </alternativeName>
</protein>
<organism>
    <name type="scientific">Desulfotalea psychrophila (strain LSv54 / DSM 12343)</name>
    <dbReference type="NCBI Taxonomy" id="177439"/>
    <lineage>
        <taxon>Bacteria</taxon>
        <taxon>Pseudomonadati</taxon>
        <taxon>Thermodesulfobacteriota</taxon>
        <taxon>Desulfobulbia</taxon>
        <taxon>Desulfobulbales</taxon>
        <taxon>Desulfocapsaceae</taxon>
        <taxon>Desulfotalea</taxon>
    </lineage>
</organism>
<proteinExistence type="inferred from homology"/>
<accession>Q6ALS3</accession>
<keyword id="KW-0963">Cytoplasm</keyword>
<keyword id="KW-0456">Lyase</keyword>
<keyword id="KW-1185">Reference proteome</keyword>
<keyword id="KW-0704">Schiff base</keyword>
<reference key="1">
    <citation type="journal article" date="2004" name="Environ. Microbiol.">
        <title>The genome of Desulfotalea psychrophila, a sulfate-reducing bacterium from permanently cold Arctic sediments.</title>
        <authorList>
            <person name="Rabus R."/>
            <person name="Ruepp A."/>
            <person name="Frickey T."/>
            <person name="Rattei T."/>
            <person name="Fartmann B."/>
            <person name="Stark M."/>
            <person name="Bauer M."/>
            <person name="Zibat A."/>
            <person name="Lombardot T."/>
            <person name="Becker I."/>
            <person name="Amann J."/>
            <person name="Gellner K."/>
            <person name="Teeling H."/>
            <person name="Leuschner W.D."/>
            <person name="Gloeckner F.-O."/>
            <person name="Lupas A.N."/>
            <person name="Amann R."/>
            <person name="Klenk H.-P."/>
        </authorList>
    </citation>
    <scope>NUCLEOTIDE SEQUENCE [LARGE SCALE GENOMIC DNA]</scope>
    <source>
        <strain>DSM 12343 / LSv54</strain>
    </source>
</reference>
<dbReference type="EC" id="4.1.2.4" evidence="1"/>
<dbReference type="EMBL" id="CR522870">
    <property type="protein sequence ID" value="CAG36702.1"/>
    <property type="molecule type" value="Genomic_DNA"/>
</dbReference>
<dbReference type="RefSeq" id="WP_011189214.1">
    <property type="nucleotide sequence ID" value="NC_006138.1"/>
</dbReference>
<dbReference type="SMR" id="Q6ALS3"/>
<dbReference type="STRING" id="177439.DP1973"/>
<dbReference type="KEGG" id="dps:DP1973"/>
<dbReference type="eggNOG" id="COG0274">
    <property type="taxonomic scope" value="Bacteria"/>
</dbReference>
<dbReference type="HOGENOM" id="CLU_053595_0_1_7"/>
<dbReference type="OrthoDB" id="9774832at2"/>
<dbReference type="UniPathway" id="UPA00002">
    <property type="reaction ID" value="UER00468"/>
</dbReference>
<dbReference type="Proteomes" id="UP000000602">
    <property type="component" value="Chromosome"/>
</dbReference>
<dbReference type="GO" id="GO:0005737">
    <property type="term" value="C:cytoplasm"/>
    <property type="evidence" value="ECO:0007669"/>
    <property type="project" value="UniProtKB-SubCell"/>
</dbReference>
<dbReference type="GO" id="GO:0004139">
    <property type="term" value="F:deoxyribose-phosphate aldolase activity"/>
    <property type="evidence" value="ECO:0007669"/>
    <property type="project" value="UniProtKB-UniRule"/>
</dbReference>
<dbReference type="GO" id="GO:0006018">
    <property type="term" value="P:2-deoxyribose 1-phosphate catabolic process"/>
    <property type="evidence" value="ECO:0007669"/>
    <property type="project" value="UniProtKB-UniRule"/>
</dbReference>
<dbReference type="GO" id="GO:0016052">
    <property type="term" value="P:carbohydrate catabolic process"/>
    <property type="evidence" value="ECO:0007669"/>
    <property type="project" value="TreeGrafter"/>
</dbReference>
<dbReference type="GO" id="GO:0009264">
    <property type="term" value="P:deoxyribonucleotide catabolic process"/>
    <property type="evidence" value="ECO:0007669"/>
    <property type="project" value="InterPro"/>
</dbReference>
<dbReference type="CDD" id="cd00959">
    <property type="entry name" value="DeoC"/>
    <property type="match status" value="1"/>
</dbReference>
<dbReference type="FunFam" id="3.20.20.70:FF:000044">
    <property type="entry name" value="Deoxyribose-phosphate aldolase"/>
    <property type="match status" value="1"/>
</dbReference>
<dbReference type="Gene3D" id="3.20.20.70">
    <property type="entry name" value="Aldolase class I"/>
    <property type="match status" value="1"/>
</dbReference>
<dbReference type="HAMAP" id="MF_00114">
    <property type="entry name" value="DeoC_type1"/>
    <property type="match status" value="1"/>
</dbReference>
<dbReference type="InterPro" id="IPR013785">
    <property type="entry name" value="Aldolase_TIM"/>
</dbReference>
<dbReference type="InterPro" id="IPR011343">
    <property type="entry name" value="DeoC"/>
</dbReference>
<dbReference type="InterPro" id="IPR002915">
    <property type="entry name" value="DeoC/FbaB/LacD_aldolase"/>
</dbReference>
<dbReference type="InterPro" id="IPR028581">
    <property type="entry name" value="DeoC_typeI"/>
</dbReference>
<dbReference type="NCBIfam" id="TIGR00126">
    <property type="entry name" value="deoC"/>
    <property type="match status" value="1"/>
</dbReference>
<dbReference type="PANTHER" id="PTHR10889">
    <property type="entry name" value="DEOXYRIBOSE-PHOSPHATE ALDOLASE"/>
    <property type="match status" value="1"/>
</dbReference>
<dbReference type="PANTHER" id="PTHR10889:SF1">
    <property type="entry name" value="DEOXYRIBOSE-PHOSPHATE ALDOLASE"/>
    <property type="match status" value="1"/>
</dbReference>
<dbReference type="Pfam" id="PF01791">
    <property type="entry name" value="DeoC"/>
    <property type="match status" value="1"/>
</dbReference>
<dbReference type="PIRSF" id="PIRSF001357">
    <property type="entry name" value="DeoC"/>
    <property type="match status" value="1"/>
</dbReference>
<dbReference type="SMART" id="SM01133">
    <property type="entry name" value="DeoC"/>
    <property type="match status" value="1"/>
</dbReference>
<dbReference type="SUPFAM" id="SSF51569">
    <property type="entry name" value="Aldolase"/>
    <property type="match status" value="1"/>
</dbReference>
<comment type="function">
    <text evidence="1">Catalyzes a reversible aldol reaction between acetaldehyde and D-glyceraldehyde 3-phosphate to generate 2-deoxy-D-ribose 5-phosphate.</text>
</comment>
<comment type="catalytic activity">
    <reaction evidence="1">
        <text>2-deoxy-D-ribose 5-phosphate = D-glyceraldehyde 3-phosphate + acetaldehyde</text>
        <dbReference type="Rhea" id="RHEA:12821"/>
        <dbReference type="ChEBI" id="CHEBI:15343"/>
        <dbReference type="ChEBI" id="CHEBI:59776"/>
        <dbReference type="ChEBI" id="CHEBI:62877"/>
        <dbReference type="EC" id="4.1.2.4"/>
    </reaction>
</comment>
<comment type="pathway">
    <text evidence="1">Carbohydrate degradation; 2-deoxy-D-ribose 1-phosphate degradation; D-glyceraldehyde 3-phosphate and acetaldehyde from 2-deoxy-alpha-D-ribose 1-phosphate: step 2/2.</text>
</comment>
<comment type="subcellular location">
    <subcellularLocation>
        <location evidence="1">Cytoplasm</location>
    </subcellularLocation>
</comment>
<comment type="similarity">
    <text evidence="1">Belongs to the DeoC/FbaB aldolase family. DeoC type 1 subfamily.</text>
</comment>
<sequence length="227" mass="23526">MNTIISPKEIALYIDHTLLKPEASPAAIRTLCAEAREYSFKTVCVNSCYVPLCVEELQACPVDVCSVVGFPLGAMLSSAKAYEAKLAVAAGADEIDMVINIGLLKAGELEAVRADIETVFAACGEADLKVIIETGLLSDAEKKSVCQICKEVGVAFVKTSTGFGHGGATVADVELMRAVVGERCKVKASGGVRNLADARALIAAGANRIGASAGIAIVNGEEVPPSR</sequence>